<comment type="function">
    <text evidence="1">Odorant receptor which mediates acceptance or avoidance behavior, depending on its substrates. The odorant receptor repertoire encodes a large collection of odor stimuli that vary widely in identity, intensity, and duration. May form a complex with Orco to form odorant-sensing units, providing sensitive and prolonged odorant signaling and calcium permeability (By similarity).</text>
</comment>
<comment type="subunit">
    <text evidence="1">Interacts with Orco. Complexes exist early in the endomembrane system in olfactory sensory neurons (OSNs), coupling these complexes to the conserved ciliary trafficking pathway (By similarity).</text>
</comment>
<comment type="subcellular location">
    <subcellularLocation>
        <location evidence="1">Cell membrane</location>
        <topology evidence="1">Multi-pass membrane protein</topology>
    </subcellularLocation>
</comment>
<comment type="miscellaneous">
    <text>The atypical heteromeric and topological design of the odorant receptors appears to be an insect-specific solution for odor recognition, making the OR/Orco complex an attractive target for the development of highly selective insect repellents to disrupt olfactory-mediated host-seeking behaviors of insect disease vectors. Odor-evoked OR currents are independent of known G-protein-coupled second messenger pathways.</text>
</comment>
<comment type="similarity">
    <text evidence="4">Belongs to the insect chemoreceptor superfamily. Heteromeric odorant receptor channel (TC 1.A.69) family. Or2a subfamily.</text>
</comment>
<feature type="chain" id="PRO_0000174231" description="Putative odorant receptor 19b">
    <location>
        <begin position="1"/>
        <end position="387"/>
    </location>
</feature>
<feature type="topological domain" description="Cytoplasmic" evidence="2">
    <location>
        <begin position="1"/>
        <end position="40"/>
    </location>
</feature>
<feature type="transmembrane region" description="Helical; Name=1" evidence="2">
    <location>
        <begin position="41"/>
        <end position="61"/>
    </location>
</feature>
<feature type="topological domain" description="Extracellular" evidence="2">
    <location>
        <begin position="62"/>
        <end position="71"/>
    </location>
</feature>
<feature type="transmembrane region" description="Helical; Name=2" evidence="2">
    <location>
        <begin position="72"/>
        <end position="92"/>
    </location>
</feature>
<feature type="topological domain" description="Cytoplasmic" evidence="2">
    <location>
        <begin position="93"/>
        <end position="127"/>
    </location>
</feature>
<feature type="transmembrane region" description="Helical; Name=3" evidence="2">
    <location>
        <begin position="128"/>
        <end position="148"/>
    </location>
</feature>
<feature type="topological domain" description="Extracellular" evidence="2">
    <location>
        <begin position="149"/>
        <end position="171"/>
    </location>
</feature>
<feature type="transmembrane region" description="Helical; Name=4" evidence="2">
    <location>
        <begin position="172"/>
        <end position="192"/>
    </location>
</feature>
<feature type="topological domain" description="Cytoplasmic" evidence="2">
    <location>
        <begin position="193"/>
        <end position="254"/>
    </location>
</feature>
<feature type="transmembrane region" description="Helical; Name=5" evidence="2">
    <location>
        <begin position="255"/>
        <end position="275"/>
    </location>
</feature>
<feature type="topological domain" description="Extracellular" evidence="2">
    <location>
        <begin position="276"/>
        <end position="285"/>
    </location>
</feature>
<feature type="transmembrane region" description="Helical; Name=6" evidence="2">
    <location>
        <begin position="286"/>
        <end position="306"/>
    </location>
</feature>
<feature type="topological domain" description="Cytoplasmic" evidence="2">
    <location>
        <begin position="307"/>
        <end position="336"/>
    </location>
</feature>
<feature type="transmembrane region" description="Helical; Name=7" evidence="2">
    <location>
        <begin position="337"/>
        <end position="357"/>
    </location>
</feature>
<feature type="topological domain" description="Extracellular" evidence="2">
    <location>
        <begin position="358"/>
        <end position="387"/>
    </location>
</feature>
<reference evidence="5" key="1">
    <citation type="journal article" date="2000" name="Science">
        <title>The genome sequence of Drosophila melanogaster.</title>
        <authorList>
            <person name="Adams M.D."/>
            <person name="Celniker S.E."/>
            <person name="Holt R.A."/>
            <person name="Evans C.A."/>
            <person name="Gocayne J.D."/>
            <person name="Amanatides P.G."/>
            <person name="Scherer S.E."/>
            <person name="Li P.W."/>
            <person name="Hoskins R.A."/>
            <person name="Galle R.F."/>
            <person name="George R.A."/>
            <person name="Lewis S.E."/>
            <person name="Richards S."/>
            <person name="Ashburner M."/>
            <person name="Henderson S.N."/>
            <person name="Sutton G.G."/>
            <person name="Wortman J.R."/>
            <person name="Yandell M.D."/>
            <person name="Zhang Q."/>
            <person name="Chen L.X."/>
            <person name="Brandon R.C."/>
            <person name="Rogers Y.-H.C."/>
            <person name="Blazej R.G."/>
            <person name="Champe M."/>
            <person name="Pfeiffer B.D."/>
            <person name="Wan K.H."/>
            <person name="Doyle C."/>
            <person name="Baxter E.G."/>
            <person name="Helt G."/>
            <person name="Nelson C.R."/>
            <person name="Miklos G.L.G."/>
            <person name="Abril J.F."/>
            <person name="Agbayani A."/>
            <person name="An H.-J."/>
            <person name="Andrews-Pfannkoch C."/>
            <person name="Baldwin D."/>
            <person name="Ballew R.M."/>
            <person name="Basu A."/>
            <person name="Baxendale J."/>
            <person name="Bayraktaroglu L."/>
            <person name="Beasley E.M."/>
            <person name="Beeson K.Y."/>
            <person name="Benos P.V."/>
            <person name="Berman B.P."/>
            <person name="Bhandari D."/>
            <person name="Bolshakov S."/>
            <person name="Borkova D."/>
            <person name="Botchan M.R."/>
            <person name="Bouck J."/>
            <person name="Brokstein P."/>
            <person name="Brottier P."/>
            <person name="Burtis K.C."/>
            <person name="Busam D.A."/>
            <person name="Butler H."/>
            <person name="Cadieu E."/>
            <person name="Center A."/>
            <person name="Chandra I."/>
            <person name="Cherry J.M."/>
            <person name="Cawley S."/>
            <person name="Dahlke C."/>
            <person name="Davenport L.B."/>
            <person name="Davies P."/>
            <person name="de Pablos B."/>
            <person name="Delcher A."/>
            <person name="Deng Z."/>
            <person name="Mays A.D."/>
            <person name="Dew I."/>
            <person name="Dietz S.M."/>
            <person name="Dodson K."/>
            <person name="Doup L.E."/>
            <person name="Downes M."/>
            <person name="Dugan-Rocha S."/>
            <person name="Dunkov B.C."/>
            <person name="Dunn P."/>
            <person name="Durbin K.J."/>
            <person name="Evangelista C.C."/>
            <person name="Ferraz C."/>
            <person name="Ferriera S."/>
            <person name="Fleischmann W."/>
            <person name="Fosler C."/>
            <person name="Gabrielian A.E."/>
            <person name="Garg N.S."/>
            <person name="Gelbart W.M."/>
            <person name="Glasser K."/>
            <person name="Glodek A."/>
            <person name="Gong F."/>
            <person name="Gorrell J.H."/>
            <person name="Gu Z."/>
            <person name="Guan P."/>
            <person name="Harris M."/>
            <person name="Harris N.L."/>
            <person name="Harvey D.A."/>
            <person name="Heiman T.J."/>
            <person name="Hernandez J.R."/>
            <person name="Houck J."/>
            <person name="Hostin D."/>
            <person name="Houston K.A."/>
            <person name="Howland T.J."/>
            <person name="Wei M.-H."/>
            <person name="Ibegwam C."/>
            <person name="Jalali M."/>
            <person name="Kalush F."/>
            <person name="Karpen G.H."/>
            <person name="Ke Z."/>
            <person name="Kennison J.A."/>
            <person name="Ketchum K.A."/>
            <person name="Kimmel B.E."/>
            <person name="Kodira C.D."/>
            <person name="Kraft C.L."/>
            <person name="Kravitz S."/>
            <person name="Kulp D."/>
            <person name="Lai Z."/>
            <person name="Lasko P."/>
            <person name="Lei Y."/>
            <person name="Levitsky A.A."/>
            <person name="Li J.H."/>
            <person name="Li Z."/>
            <person name="Liang Y."/>
            <person name="Lin X."/>
            <person name="Liu X."/>
            <person name="Mattei B."/>
            <person name="McIntosh T.C."/>
            <person name="McLeod M.P."/>
            <person name="McPherson D."/>
            <person name="Merkulov G."/>
            <person name="Milshina N.V."/>
            <person name="Mobarry C."/>
            <person name="Morris J."/>
            <person name="Moshrefi A."/>
            <person name="Mount S.M."/>
            <person name="Moy M."/>
            <person name="Murphy B."/>
            <person name="Murphy L."/>
            <person name="Muzny D.M."/>
            <person name="Nelson D.L."/>
            <person name="Nelson D.R."/>
            <person name="Nelson K.A."/>
            <person name="Nixon K."/>
            <person name="Nusskern D.R."/>
            <person name="Pacleb J.M."/>
            <person name="Palazzolo M."/>
            <person name="Pittman G.S."/>
            <person name="Pan S."/>
            <person name="Pollard J."/>
            <person name="Puri V."/>
            <person name="Reese M.G."/>
            <person name="Reinert K."/>
            <person name="Remington K."/>
            <person name="Saunders R.D.C."/>
            <person name="Scheeler F."/>
            <person name="Shen H."/>
            <person name="Shue B.C."/>
            <person name="Siden-Kiamos I."/>
            <person name="Simpson M."/>
            <person name="Skupski M.P."/>
            <person name="Smith T.J."/>
            <person name="Spier E."/>
            <person name="Spradling A.C."/>
            <person name="Stapleton M."/>
            <person name="Strong R."/>
            <person name="Sun E."/>
            <person name="Svirskas R."/>
            <person name="Tector C."/>
            <person name="Turner R."/>
            <person name="Venter E."/>
            <person name="Wang A.H."/>
            <person name="Wang X."/>
            <person name="Wang Z.-Y."/>
            <person name="Wassarman D.A."/>
            <person name="Weinstock G.M."/>
            <person name="Weissenbach J."/>
            <person name="Williams S.M."/>
            <person name="Woodage T."/>
            <person name="Worley K.C."/>
            <person name="Wu D."/>
            <person name="Yang S."/>
            <person name="Yao Q.A."/>
            <person name="Ye J."/>
            <person name="Yeh R.-F."/>
            <person name="Zaveri J.S."/>
            <person name="Zhan M."/>
            <person name="Zhang G."/>
            <person name="Zhao Q."/>
            <person name="Zheng L."/>
            <person name="Zheng X.H."/>
            <person name="Zhong F.N."/>
            <person name="Zhong W."/>
            <person name="Zhou X."/>
            <person name="Zhu S.C."/>
            <person name="Zhu X."/>
            <person name="Smith H.O."/>
            <person name="Gibbs R.A."/>
            <person name="Myers E.W."/>
            <person name="Rubin G.M."/>
            <person name="Venter J.C."/>
        </authorList>
    </citation>
    <scope>NUCLEOTIDE SEQUENCE [LARGE SCALE GENOMIC DNA]</scope>
    <source>
        <strain evidence="3">Berkeley</strain>
    </source>
</reference>
<reference evidence="4 5" key="2">
    <citation type="journal article" date="2002" name="Genome Biol.">
        <title>Annotation of the Drosophila melanogaster euchromatic genome: a systematic review.</title>
        <authorList>
            <person name="Misra S."/>
            <person name="Crosby M.A."/>
            <person name="Mungall C.J."/>
            <person name="Matthews B.B."/>
            <person name="Campbell K.S."/>
            <person name="Hradecky P."/>
            <person name="Huang Y."/>
            <person name="Kaminker J.S."/>
            <person name="Millburn G.H."/>
            <person name="Prochnik S.E."/>
            <person name="Smith C.D."/>
            <person name="Tupy J.L."/>
            <person name="Whitfield E.J."/>
            <person name="Bayraktaroglu L."/>
            <person name="Berman B.P."/>
            <person name="Bettencourt B.R."/>
            <person name="Celniker S.E."/>
            <person name="de Grey A.D.N.J."/>
            <person name="Drysdale R.A."/>
            <person name="Harris N.L."/>
            <person name="Richter J."/>
            <person name="Russo S."/>
            <person name="Schroeder A.J."/>
            <person name="Shu S.Q."/>
            <person name="Stapleton M."/>
            <person name="Yamada C."/>
            <person name="Ashburner M."/>
            <person name="Gelbart W.M."/>
            <person name="Rubin G.M."/>
            <person name="Lewis S.E."/>
        </authorList>
    </citation>
    <scope>GENOME REANNOTATION</scope>
    <source>
        <strain>Berkeley</strain>
    </source>
</reference>
<reference evidence="4" key="3">
    <citation type="journal article" date="2003" name="Proc. Natl. Acad. Sci. U.S.A.">
        <title>Molecular evolution of the insect chemoreceptor gene superfamily in Drosophila melanogaster.</title>
        <authorList>
            <person name="Robertson H.M."/>
            <person name="Warr C.G."/>
            <person name="Carlson J.R."/>
        </authorList>
    </citation>
    <scope>IDENTIFICATION</scope>
</reference>
<evidence type="ECO:0000250" key="1"/>
<evidence type="ECO:0000255" key="2"/>
<evidence type="ECO:0000269" key="3">
    <source>
    </source>
</evidence>
<evidence type="ECO:0000305" key="4"/>
<evidence type="ECO:0000312" key="5">
    <source>
        <dbReference type="EMBL" id="AAN08991.1"/>
    </source>
</evidence>
<organism>
    <name type="scientific">Drosophila melanogaster</name>
    <name type="common">Fruit fly</name>
    <dbReference type="NCBI Taxonomy" id="7227"/>
    <lineage>
        <taxon>Eukaryota</taxon>
        <taxon>Metazoa</taxon>
        <taxon>Ecdysozoa</taxon>
        <taxon>Arthropoda</taxon>
        <taxon>Hexapoda</taxon>
        <taxon>Insecta</taxon>
        <taxon>Pterygota</taxon>
        <taxon>Neoptera</taxon>
        <taxon>Endopterygota</taxon>
        <taxon>Diptera</taxon>
        <taxon>Brachycera</taxon>
        <taxon>Muscomorpha</taxon>
        <taxon>Ephydroidea</taxon>
        <taxon>Drosophilidae</taxon>
        <taxon>Drosophila</taxon>
        <taxon>Sophophora</taxon>
    </lineage>
</organism>
<gene>
    <name evidence="5" type="primary">Or19b</name>
    <name type="ORF">CG32825</name>
</gene>
<proteinExistence type="inferred from homology"/>
<keyword id="KW-1003">Cell membrane</keyword>
<keyword id="KW-0472">Membrane</keyword>
<keyword id="KW-0552">Olfaction</keyword>
<keyword id="KW-0675">Receptor</keyword>
<keyword id="KW-1185">Reference proteome</keyword>
<keyword id="KW-0716">Sensory transduction</keyword>
<keyword id="KW-0807">Transducer</keyword>
<keyword id="KW-0812">Transmembrane</keyword>
<keyword id="KW-1133">Transmembrane helix</keyword>
<name>OR19B_DROME</name>
<protein>
    <recommendedName>
        <fullName>Putative odorant receptor 19b</fullName>
    </recommendedName>
</protein>
<sequence>MDISKVDSTRALVNHWRIFRIMGIHPPGKRTFWGRHYTAYSMVWNVTFHICIWVSFSVNLLQSNSLETFCESLCVTMPHTLYMLKLINVRRMRGEMISSHWLLRLLDKRLGCADERQIIMAGIERAEFIFRTIFRGLACTVVLGIIYISASSEPTLMYPTWIPWNWKDSTSAYLATAMLHTTALMANATLVLNLSSYPGTYLILVSVHTKALALRVSKLGYGAPLPAVRMQAILVGYIHDHQIILRLFKSLERSLSMTCFLQFFSTACAQCTICYFLLFGNVGIMRFMNMLFLLVILTTETLLLCYTAELPCKEGESLLTAVYSCNWLSQSVNFRRLLLLMLARCQIPMILVSGVIVPISMKTFTVMIKGAYTMLTLLNEIRKTSLE</sequence>
<dbReference type="EMBL" id="AE014298">
    <property type="protein sequence ID" value="AAN08991.1"/>
    <property type="molecule type" value="Genomic_DNA"/>
</dbReference>
<dbReference type="RefSeq" id="NP_728315.1">
    <property type="nucleotide sequence ID" value="NM_167690.1"/>
</dbReference>
<dbReference type="SMR" id="Q8IRZ5"/>
<dbReference type="FunCoup" id="Q8IRZ5">
    <property type="interactions" value="40"/>
</dbReference>
<dbReference type="STRING" id="7227.FBpp0070002"/>
<dbReference type="PaxDb" id="7227-FBpp0070002"/>
<dbReference type="EnsemblMetazoa" id="FBtr0070003">
    <property type="protein sequence ID" value="FBpp0070002"/>
    <property type="gene ID" value="FBgn0062565"/>
</dbReference>
<dbReference type="GeneID" id="260693"/>
<dbReference type="KEGG" id="dme:Dmel_CG32825"/>
<dbReference type="AGR" id="FB:FBgn0062565"/>
<dbReference type="CTD" id="260693"/>
<dbReference type="FlyBase" id="FBgn0062565">
    <property type="gene designation" value="Or19b"/>
</dbReference>
<dbReference type="VEuPathDB" id="VectorBase:FBgn0062565"/>
<dbReference type="eggNOG" id="ENOG502T6TE">
    <property type="taxonomic scope" value="Eukaryota"/>
</dbReference>
<dbReference type="GeneTree" id="ENSGT00540000073151"/>
<dbReference type="HOGENOM" id="CLU_033399_8_1_1"/>
<dbReference type="InParanoid" id="Q8IRZ5"/>
<dbReference type="OMA" id="CYASEQV"/>
<dbReference type="OrthoDB" id="6604226at2759"/>
<dbReference type="PhylomeDB" id="Q8IRZ5"/>
<dbReference type="BioGRID-ORCS" id="260693">
    <property type="hits" value="0 hits in 1 CRISPR screen"/>
</dbReference>
<dbReference type="GenomeRNAi" id="260693"/>
<dbReference type="PRO" id="PR:Q8IRZ5"/>
<dbReference type="Proteomes" id="UP000000803">
    <property type="component" value="Chromosome X"/>
</dbReference>
<dbReference type="Bgee" id="FBgn0062565">
    <property type="expression patterns" value="Expressed in adult olfactory receptor neuron Or19 (Drosophila)"/>
</dbReference>
<dbReference type="GO" id="GO:0034703">
    <property type="term" value="C:cation channel complex"/>
    <property type="evidence" value="ECO:0000250"/>
    <property type="project" value="FlyBase"/>
</dbReference>
<dbReference type="GO" id="GO:0032590">
    <property type="term" value="C:dendrite membrane"/>
    <property type="evidence" value="ECO:0000250"/>
    <property type="project" value="FlyBase"/>
</dbReference>
<dbReference type="GO" id="GO:0016020">
    <property type="term" value="C:membrane"/>
    <property type="evidence" value="ECO:0000255"/>
    <property type="project" value="FlyBase"/>
</dbReference>
<dbReference type="GO" id="GO:0005886">
    <property type="term" value="C:plasma membrane"/>
    <property type="evidence" value="ECO:0000250"/>
    <property type="project" value="FlyBase"/>
</dbReference>
<dbReference type="GO" id="GO:0170020">
    <property type="term" value="F:ionotropic olfactory receptor activity"/>
    <property type="evidence" value="ECO:0000250"/>
    <property type="project" value="FlyBase"/>
</dbReference>
<dbReference type="GO" id="GO:0005549">
    <property type="term" value="F:odorant binding"/>
    <property type="evidence" value="ECO:0000250"/>
    <property type="project" value="FlyBase"/>
</dbReference>
<dbReference type="GO" id="GO:0004984">
    <property type="term" value="F:olfactory receptor activity"/>
    <property type="evidence" value="ECO:0000250"/>
    <property type="project" value="FlyBase"/>
</dbReference>
<dbReference type="GO" id="GO:0050911">
    <property type="term" value="P:detection of chemical stimulus involved in sensory perception of smell"/>
    <property type="evidence" value="ECO:0000250"/>
    <property type="project" value="FlyBase"/>
</dbReference>
<dbReference type="GO" id="GO:0007165">
    <property type="term" value="P:signal transduction"/>
    <property type="evidence" value="ECO:0007669"/>
    <property type="project" value="UniProtKB-KW"/>
</dbReference>
<dbReference type="InterPro" id="IPR004117">
    <property type="entry name" value="7tm6_olfct_rcpt"/>
</dbReference>
<dbReference type="PANTHER" id="PTHR21137">
    <property type="entry name" value="ODORANT RECEPTOR"/>
    <property type="match status" value="1"/>
</dbReference>
<dbReference type="PANTHER" id="PTHR21137:SF35">
    <property type="entry name" value="ODORANT RECEPTOR 19A-RELATED"/>
    <property type="match status" value="1"/>
</dbReference>
<dbReference type="Pfam" id="PF02949">
    <property type="entry name" value="7tm_6"/>
    <property type="match status" value="1"/>
</dbReference>
<accession>Q8IRZ5</accession>